<accession>Q9M8M5</accession>
<sequence>MENSYTVDGHRLQYSVPLSSMHETSQNSETYGLSKESPLVCMPLFETNTTSFDISSLFSFNPKPEPENTHRVMDDSIAAVVGENVLFGDKNKVSDHLTKEGGVKRGRKMPQKTGGFMGVRKRPWGRWSAEIRDRIGRCRHWLGTFDTAEEAARAYDAAARRLRGTKAKTNFVIPPLFPKEIAQAQEDNRMRQKQKKKKKKKVSVRKCVKVTSVAQLFDDANFINSSSIKGNVISSIDNLEKMGLELDLSLGLLSRK</sequence>
<protein>
    <recommendedName>
        <fullName>Ethylene-responsive transcription factor ERF084</fullName>
    </recommendedName>
</protein>
<feature type="chain" id="PRO_0000290408" description="Ethylene-responsive transcription factor ERF084">
    <location>
        <begin position="1"/>
        <end position="256"/>
    </location>
</feature>
<feature type="DNA-binding region" description="AP2/ERF" evidence="2">
    <location>
        <begin position="115"/>
        <end position="172"/>
    </location>
</feature>
<dbReference type="EMBL" id="AY560844">
    <property type="protein sequence ID" value="AAT44911.1"/>
    <property type="molecule type" value="mRNA"/>
</dbReference>
<dbReference type="EMBL" id="AC018849">
    <property type="protein sequence ID" value="AAF27133.1"/>
    <property type="molecule type" value="Genomic_DNA"/>
</dbReference>
<dbReference type="EMBL" id="CP002684">
    <property type="protein sequence ID" value="AEE36424.1"/>
    <property type="molecule type" value="Genomic_DNA"/>
</dbReference>
<dbReference type="EMBL" id="DQ446446">
    <property type="protein sequence ID" value="ABE65787.1"/>
    <property type="molecule type" value="mRNA"/>
</dbReference>
<dbReference type="EMBL" id="BT026038">
    <property type="protein sequence ID" value="ABG48394.1"/>
    <property type="molecule type" value="mRNA"/>
</dbReference>
<dbReference type="PIR" id="H96837">
    <property type="entry name" value="H96837"/>
</dbReference>
<dbReference type="RefSeq" id="NP_178173.1">
    <property type="nucleotide sequence ID" value="NM_106706.1"/>
</dbReference>
<dbReference type="SMR" id="Q9M8M5"/>
<dbReference type="BioGRID" id="29615">
    <property type="interactions" value="1"/>
</dbReference>
<dbReference type="FunCoup" id="Q9M8M5">
    <property type="interactions" value="26"/>
</dbReference>
<dbReference type="STRING" id="3702.Q9M8M5"/>
<dbReference type="PaxDb" id="3702-AT1G80580.1"/>
<dbReference type="EnsemblPlants" id="AT1G80580.1">
    <property type="protein sequence ID" value="AT1G80580.1"/>
    <property type="gene ID" value="AT1G80580"/>
</dbReference>
<dbReference type="GeneID" id="844397"/>
<dbReference type="Gramene" id="AT1G80580.1">
    <property type="protein sequence ID" value="AT1G80580.1"/>
    <property type="gene ID" value="AT1G80580"/>
</dbReference>
<dbReference type="KEGG" id="ath:AT1G80580"/>
<dbReference type="Araport" id="AT1G80580"/>
<dbReference type="TAIR" id="AT1G80580"/>
<dbReference type="eggNOG" id="ENOG502S2TQ">
    <property type="taxonomic scope" value="Eukaryota"/>
</dbReference>
<dbReference type="HOGENOM" id="CLU_1079043_0_0_1"/>
<dbReference type="InParanoid" id="Q9M8M5"/>
<dbReference type="OMA" id="GHRLQYS"/>
<dbReference type="PhylomeDB" id="Q9M8M5"/>
<dbReference type="PRO" id="PR:Q9M8M5"/>
<dbReference type="Proteomes" id="UP000006548">
    <property type="component" value="Chromosome 1"/>
</dbReference>
<dbReference type="ExpressionAtlas" id="Q9M8M5">
    <property type="expression patterns" value="baseline and differential"/>
</dbReference>
<dbReference type="GO" id="GO:0005634">
    <property type="term" value="C:nucleus"/>
    <property type="evidence" value="ECO:0007669"/>
    <property type="project" value="UniProtKB-SubCell"/>
</dbReference>
<dbReference type="GO" id="GO:0003677">
    <property type="term" value="F:DNA binding"/>
    <property type="evidence" value="ECO:0007669"/>
    <property type="project" value="UniProtKB-KW"/>
</dbReference>
<dbReference type="GO" id="GO:0003700">
    <property type="term" value="F:DNA-binding transcription factor activity"/>
    <property type="evidence" value="ECO:0000250"/>
    <property type="project" value="TAIR"/>
</dbReference>
<dbReference type="GO" id="GO:0009873">
    <property type="term" value="P:ethylene-activated signaling pathway"/>
    <property type="evidence" value="ECO:0000304"/>
    <property type="project" value="TAIR"/>
</dbReference>
<dbReference type="CDD" id="cd00018">
    <property type="entry name" value="AP2"/>
    <property type="match status" value="1"/>
</dbReference>
<dbReference type="FunFam" id="3.30.730.10:FF:000005">
    <property type="entry name" value="ethylene-responsive transcription factor RAP2-11"/>
    <property type="match status" value="1"/>
</dbReference>
<dbReference type="Gene3D" id="3.30.730.10">
    <property type="entry name" value="AP2/ERF domain"/>
    <property type="match status" value="1"/>
</dbReference>
<dbReference type="InterPro" id="IPR001471">
    <property type="entry name" value="AP2/ERF_dom"/>
</dbReference>
<dbReference type="InterPro" id="IPR036955">
    <property type="entry name" value="AP2/ERF_dom_sf"/>
</dbReference>
<dbReference type="InterPro" id="IPR016177">
    <property type="entry name" value="DNA-bd_dom_sf"/>
</dbReference>
<dbReference type="PANTHER" id="PTHR31677">
    <property type="entry name" value="AP2 DOMAIN CLASS TRANSCRIPTION FACTOR"/>
    <property type="match status" value="1"/>
</dbReference>
<dbReference type="PANTHER" id="PTHR31677:SF75">
    <property type="entry name" value="ETHYLENE-RESPONSIVE TRANSCRIPTION FACTOR ERF084"/>
    <property type="match status" value="1"/>
</dbReference>
<dbReference type="Pfam" id="PF00847">
    <property type="entry name" value="AP2"/>
    <property type="match status" value="1"/>
</dbReference>
<dbReference type="PRINTS" id="PR00367">
    <property type="entry name" value="ETHRSPELEMNT"/>
</dbReference>
<dbReference type="SMART" id="SM00380">
    <property type="entry name" value="AP2"/>
    <property type="match status" value="1"/>
</dbReference>
<dbReference type="SUPFAM" id="SSF54171">
    <property type="entry name" value="DNA-binding domain"/>
    <property type="match status" value="1"/>
</dbReference>
<dbReference type="PROSITE" id="PS51032">
    <property type="entry name" value="AP2_ERF"/>
    <property type="match status" value="1"/>
</dbReference>
<evidence type="ECO:0000250" key="1"/>
<evidence type="ECO:0000255" key="2">
    <source>
        <dbReference type="PROSITE-ProRule" id="PRU00366"/>
    </source>
</evidence>
<evidence type="ECO:0000305" key="3"/>
<name>ERF84_ARATH</name>
<organism>
    <name type="scientific">Arabidopsis thaliana</name>
    <name type="common">Mouse-ear cress</name>
    <dbReference type="NCBI Taxonomy" id="3702"/>
    <lineage>
        <taxon>Eukaryota</taxon>
        <taxon>Viridiplantae</taxon>
        <taxon>Streptophyta</taxon>
        <taxon>Embryophyta</taxon>
        <taxon>Tracheophyta</taxon>
        <taxon>Spermatophyta</taxon>
        <taxon>Magnoliopsida</taxon>
        <taxon>eudicotyledons</taxon>
        <taxon>Gunneridae</taxon>
        <taxon>Pentapetalae</taxon>
        <taxon>rosids</taxon>
        <taxon>malvids</taxon>
        <taxon>Brassicales</taxon>
        <taxon>Brassicaceae</taxon>
        <taxon>Camelineae</taxon>
        <taxon>Arabidopsis</taxon>
    </lineage>
</organism>
<reference key="1">
    <citation type="submission" date="2004-02" db="EMBL/GenBank/DDBJ databases">
        <title>Molecular cloning, expression, phylogenetic and functional characterization of the Arabidopsis AP2/EREBP transcription factor family.</title>
        <authorList>
            <person name="Pan Y."/>
            <person name="Gong W."/>
            <person name="Liu D."/>
            <person name="Fu Q."/>
            <person name="Mei W.-Q."/>
            <person name="Song W.-Q."/>
            <person name="Ma L.-G."/>
            <person name="Luo J.-C."/>
            <person name="Deng X.-W."/>
            <person name="Zhu Y.-X."/>
        </authorList>
    </citation>
    <scope>NUCLEOTIDE SEQUENCE [MRNA]</scope>
</reference>
<reference key="2">
    <citation type="journal article" date="2000" name="Nature">
        <title>Sequence and analysis of chromosome 1 of the plant Arabidopsis thaliana.</title>
        <authorList>
            <person name="Theologis A."/>
            <person name="Ecker J.R."/>
            <person name="Palm C.J."/>
            <person name="Federspiel N.A."/>
            <person name="Kaul S."/>
            <person name="White O."/>
            <person name="Alonso J."/>
            <person name="Altafi H."/>
            <person name="Araujo R."/>
            <person name="Bowman C.L."/>
            <person name="Brooks S.Y."/>
            <person name="Buehler E."/>
            <person name="Chan A."/>
            <person name="Chao Q."/>
            <person name="Chen H."/>
            <person name="Cheuk R.F."/>
            <person name="Chin C.W."/>
            <person name="Chung M.K."/>
            <person name="Conn L."/>
            <person name="Conway A.B."/>
            <person name="Conway A.R."/>
            <person name="Creasy T.H."/>
            <person name="Dewar K."/>
            <person name="Dunn P."/>
            <person name="Etgu P."/>
            <person name="Feldblyum T.V."/>
            <person name="Feng J.-D."/>
            <person name="Fong B."/>
            <person name="Fujii C.Y."/>
            <person name="Gill J.E."/>
            <person name="Goldsmith A.D."/>
            <person name="Haas B."/>
            <person name="Hansen N.F."/>
            <person name="Hughes B."/>
            <person name="Huizar L."/>
            <person name="Hunter J.L."/>
            <person name="Jenkins J."/>
            <person name="Johnson-Hopson C."/>
            <person name="Khan S."/>
            <person name="Khaykin E."/>
            <person name="Kim C.J."/>
            <person name="Koo H.L."/>
            <person name="Kremenetskaia I."/>
            <person name="Kurtz D.B."/>
            <person name="Kwan A."/>
            <person name="Lam B."/>
            <person name="Langin-Hooper S."/>
            <person name="Lee A."/>
            <person name="Lee J.M."/>
            <person name="Lenz C.A."/>
            <person name="Li J.H."/>
            <person name="Li Y.-P."/>
            <person name="Lin X."/>
            <person name="Liu S.X."/>
            <person name="Liu Z.A."/>
            <person name="Luros J.S."/>
            <person name="Maiti R."/>
            <person name="Marziali A."/>
            <person name="Militscher J."/>
            <person name="Miranda M."/>
            <person name="Nguyen M."/>
            <person name="Nierman W.C."/>
            <person name="Osborne B.I."/>
            <person name="Pai G."/>
            <person name="Peterson J."/>
            <person name="Pham P.K."/>
            <person name="Rizzo M."/>
            <person name="Rooney T."/>
            <person name="Rowley D."/>
            <person name="Sakano H."/>
            <person name="Salzberg S.L."/>
            <person name="Schwartz J.R."/>
            <person name="Shinn P."/>
            <person name="Southwick A.M."/>
            <person name="Sun H."/>
            <person name="Tallon L.J."/>
            <person name="Tambunga G."/>
            <person name="Toriumi M.J."/>
            <person name="Town C.D."/>
            <person name="Utterback T."/>
            <person name="Van Aken S."/>
            <person name="Vaysberg M."/>
            <person name="Vysotskaia V.S."/>
            <person name="Walker M."/>
            <person name="Wu D."/>
            <person name="Yu G."/>
            <person name="Fraser C.M."/>
            <person name="Venter J.C."/>
            <person name="Davis R.W."/>
        </authorList>
    </citation>
    <scope>NUCLEOTIDE SEQUENCE [LARGE SCALE GENOMIC DNA]</scope>
    <source>
        <strain>cv. Columbia</strain>
    </source>
</reference>
<reference key="3">
    <citation type="journal article" date="2017" name="Plant J.">
        <title>Araport11: a complete reannotation of the Arabidopsis thaliana reference genome.</title>
        <authorList>
            <person name="Cheng C.Y."/>
            <person name="Krishnakumar V."/>
            <person name="Chan A.P."/>
            <person name="Thibaud-Nissen F."/>
            <person name="Schobel S."/>
            <person name="Town C.D."/>
        </authorList>
    </citation>
    <scope>GENOME REANNOTATION</scope>
    <source>
        <strain>cv. Columbia</strain>
    </source>
</reference>
<reference key="4">
    <citation type="journal article" date="2006" name="Plant Biotechnol. J.">
        <title>Simultaneous high-throughput recombinational cloning of open reading frames in closed and open configurations.</title>
        <authorList>
            <person name="Underwood B.A."/>
            <person name="Vanderhaeghen R."/>
            <person name="Whitford R."/>
            <person name="Town C.D."/>
            <person name="Hilson P."/>
        </authorList>
    </citation>
    <scope>NUCLEOTIDE SEQUENCE [LARGE SCALE MRNA]</scope>
    <source>
        <strain>cv. Columbia</strain>
    </source>
</reference>
<reference key="5">
    <citation type="submission" date="2006-07" db="EMBL/GenBank/DDBJ databases">
        <title>Arabidopsis ORF clones.</title>
        <authorList>
            <person name="Quinitio C."/>
            <person name="Chen H."/>
            <person name="Kim C.J."/>
            <person name="Shinn P."/>
            <person name="Ecker J.R."/>
        </authorList>
    </citation>
    <scope>NUCLEOTIDE SEQUENCE [LARGE SCALE MRNA]</scope>
    <source>
        <strain>cv. Columbia</strain>
    </source>
</reference>
<reference key="6">
    <citation type="journal article" date="2006" name="Plant Physiol.">
        <title>Genome-wide analysis of the ERF gene family in Arabidopsis and rice.</title>
        <authorList>
            <person name="Nakano T."/>
            <person name="Suzuki K."/>
            <person name="Fujimura T."/>
            <person name="Shinshi H."/>
        </authorList>
    </citation>
    <scope>GENE FAMILY</scope>
    <scope>NOMENCLATURE</scope>
</reference>
<comment type="function">
    <text evidence="1">Probably acts as a transcriptional activator. Binds to the GCC-box pathogenesis-related promoter element. May be involved in the regulation of gene expression by stress factors and by components of stress signal transduction pathways (By similarity).</text>
</comment>
<comment type="subcellular location">
    <subcellularLocation>
        <location evidence="3">Nucleus</location>
    </subcellularLocation>
</comment>
<comment type="similarity">
    <text evidence="3">Belongs to the AP2/ERF transcription factor family. ERF subfamily.</text>
</comment>
<keyword id="KW-0010">Activator</keyword>
<keyword id="KW-0238">DNA-binding</keyword>
<keyword id="KW-0936">Ethylene signaling pathway</keyword>
<keyword id="KW-0539">Nucleus</keyword>
<keyword id="KW-1185">Reference proteome</keyword>
<keyword id="KW-0804">Transcription</keyword>
<keyword id="KW-0805">Transcription regulation</keyword>
<proteinExistence type="evidence at transcript level"/>
<gene>
    <name type="primary">ERF084</name>
    <name type="ordered locus">At1g80580</name>
    <name type="ORF">T21F11.9</name>
</gene>